<accession>Q11AX2</accession>
<gene>
    <name evidence="1" type="primary">kdsB</name>
    <name type="ordered locus">Meso_4086</name>
</gene>
<feature type="chain" id="PRO_1000091882" description="3-deoxy-manno-octulosonate cytidylyltransferase">
    <location>
        <begin position="1"/>
        <end position="251"/>
    </location>
</feature>
<organism>
    <name type="scientific">Chelativorans sp. (strain BNC1)</name>
    <dbReference type="NCBI Taxonomy" id="266779"/>
    <lineage>
        <taxon>Bacteria</taxon>
        <taxon>Pseudomonadati</taxon>
        <taxon>Pseudomonadota</taxon>
        <taxon>Alphaproteobacteria</taxon>
        <taxon>Hyphomicrobiales</taxon>
        <taxon>Phyllobacteriaceae</taxon>
        <taxon>Chelativorans</taxon>
    </lineage>
</organism>
<comment type="function">
    <text evidence="1">Activates KDO (a required 8-carbon sugar) for incorporation into bacterial lipopolysaccharide in Gram-negative bacteria.</text>
</comment>
<comment type="catalytic activity">
    <reaction evidence="1">
        <text>3-deoxy-alpha-D-manno-oct-2-ulosonate + CTP = CMP-3-deoxy-beta-D-manno-octulosonate + diphosphate</text>
        <dbReference type="Rhea" id="RHEA:23448"/>
        <dbReference type="ChEBI" id="CHEBI:33019"/>
        <dbReference type="ChEBI" id="CHEBI:37563"/>
        <dbReference type="ChEBI" id="CHEBI:85986"/>
        <dbReference type="ChEBI" id="CHEBI:85987"/>
        <dbReference type="EC" id="2.7.7.38"/>
    </reaction>
</comment>
<comment type="pathway">
    <text evidence="1">Nucleotide-sugar biosynthesis; CMP-3-deoxy-D-manno-octulosonate biosynthesis; CMP-3-deoxy-D-manno-octulosonate from 3-deoxy-D-manno-octulosonate and CTP: step 1/1.</text>
</comment>
<comment type="pathway">
    <text evidence="1">Bacterial outer membrane biogenesis; lipopolysaccharide biosynthesis.</text>
</comment>
<comment type="subcellular location">
    <subcellularLocation>
        <location evidence="1">Cytoplasm</location>
    </subcellularLocation>
</comment>
<comment type="similarity">
    <text evidence="1">Belongs to the KdsB family.</text>
</comment>
<dbReference type="EC" id="2.7.7.38" evidence="1"/>
<dbReference type="EMBL" id="CP000390">
    <property type="protein sequence ID" value="ABG65453.1"/>
    <property type="molecule type" value="Genomic_DNA"/>
</dbReference>
<dbReference type="SMR" id="Q11AX2"/>
<dbReference type="STRING" id="266779.Meso_4086"/>
<dbReference type="KEGG" id="mes:Meso_4086"/>
<dbReference type="eggNOG" id="COG1212">
    <property type="taxonomic scope" value="Bacteria"/>
</dbReference>
<dbReference type="HOGENOM" id="CLU_065038_0_1_5"/>
<dbReference type="OrthoDB" id="9815559at2"/>
<dbReference type="UniPathway" id="UPA00030"/>
<dbReference type="UniPathway" id="UPA00358">
    <property type="reaction ID" value="UER00476"/>
</dbReference>
<dbReference type="GO" id="GO:0005829">
    <property type="term" value="C:cytosol"/>
    <property type="evidence" value="ECO:0007669"/>
    <property type="project" value="TreeGrafter"/>
</dbReference>
<dbReference type="GO" id="GO:0008690">
    <property type="term" value="F:3-deoxy-manno-octulosonate cytidylyltransferase activity"/>
    <property type="evidence" value="ECO:0007669"/>
    <property type="project" value="UniProtKB-UniRule"/>
</dbReference>
<dbReference type="GO" id="GO:0033468">
    <property type="term" value="P:CMP-keto-3-deoxy-D-manno-octulosonic acid biosynthetic process"/>
    <property type="evidence" value="ECO:0007669"/>
    <property type="project" value="UniProtKB-UniRule"/>
</dbReference>
<dbReference type="GO" id="GO:0009103">
    <property type="term" value="P:lipopolysaccharide biosynthetic process"/>
    <property type="evidence" value="ECO:0007669"/>
    <property type="project" value="UniProtKB-UniRule"/>
</dbReference>
<dbReference type="CDD" id="cd02517">
    <property type="entry name" value="CMP-KDO-Synthetase"/>
    <property type="match status" value="1"/>
</dbReference>
<dbReference type="Gene3D" id="3.90.550.10">
    <property type="entry name" value="Spore Coat Polysaccharide Biosynthesis Protein SpsA, Chain A"/>
    <property type="match status" value="1"/>
</dbReference>
<dbReference type="HAMAP" id="MF_00057">
    <property type="entry name" value="KdsB"/>
    <property type="match status" value="1"/>
</dbReference>
<dbReference type="InterPro" id="IPR003329">
    <property type="entry name" value="Cytidylyl_trans"/>
</dbReference>
<dbReference type="InterPro" id="IPR004528">
    <property type="entry name" value="KdsB"/>
</dbReference>
<dbReference type="InterPro" id="IPR029044">
    <property type="entry name" value="Nucleotide-diphossugar_trans"/>
</dbReference>
<dbReference type="NCBIfam" id="TIGR00466">
    <property type="entry name" value="kdsB"/>
    <property type="match status" value="1"/>
</dbReference>
<dbReference type="NCBIfam" id="NF003948">
    <property type="entry name" value="PRK05450.1-1"/>
    <property type="match status" value="1"/>
</dbReference>
<dbReference type="NCBIfam" id="NF003952">
    <property type="entry name" value="PRK05450.1-5"/>
    <property type="match status" value="1"/>
</dbReference>
<dbReference type="PANTHER" id="PTHR42866">
    <property type="entry name" value="3-DEOXY-MANNO-OCTULOSONATE CYTIDYLYLTRANSFERASE"/>
    <property type="match status" value="1"/>
</dbReference>
<dbReference type="PANTHER" id="PTHR42866:SF2">
    <property type="entry name" value="3-DEOXY-MANNO-OCTULOSONATE CYTIDYLYLTRANSFERASE, MITOCHONDRIAL"/>
    <property type="match status" value="1"/>
</dbReference>
<dbReference type="Pfam" id="PF02348">
    <property type="entry name" value="CTP_transf_3"/>
    <property type="match status" value="1"/>
</dbReference>
<dbReference type="SUPFAM" id="SSF53448">
    <property type="entry name" value="Nucleotide-diphospho-sugar transferases"/>
    <property type="match status" value="1"/>
</dbReference>
<proteinExistence type="inferred from homology"/>
<protein>
    <recommendedName>
        <fullName evidence="1">3-deoxy-manno-octulosonate cytidylyltransferase</fullName>
        <ecNumber evidence="1">2.7.7.38</ecNumber>
    </recommendedName>
    <alternativeName>
        <fullName evidence="1">CMP-2-keto-3-deoxyoctulosonic acid synthase</fullName>
        <shortName evidence="1">CKS</shortName>
        <shortName evidence="1">CMP-KDO synthase</shortName>
    </alternativeName>
</protein>
<sequence length="251" mass="27181">MTSIILIPARMASTRLPGKPLADIAGRTMIAQVVARALESGVGRVVVATDTEEVAAAARAEGVEAVMTRADHQSGSDRIFEALQTIDPGATAEIVINLQGDLPTIPPEDIRAVVRPLENADTDIATLGVEISDEEEKANPNVVKIVGVPVKTASDALRLRALYFTRATAPWGEGPLFHHIGIYAYRRRALERFVALPPGTLEMRERLEQLRALEAGMRIEAEIVRSVPLGVDTPADLERARQLLSARTESR</sequence>
<keyword id="KW-0963">Cytoplasm</keyword>
<keyword id="KW-0448">Lipopolysaccharide biosynthesis</keyword>
<keyword id="KW-0548">Nucleotidyltransferase</keyword>
<keyword id="KW-0808">Transferase</keyword>
<evidence type="ECO:0000255" key="1">
    <source>
        <dbReference type="HAMAP-Rule" id="MF_00057"/>
    </source>
</evidence>
<reference key="1">
    <citation type="submission" date="2006-06" db="EMBL/GenBank/DDBJ databases">
        <title>Complete sequence of chromosome of Mesorhizobium sp. BNC1.</title>
        <authorList>
            <consortium name="US DOE Joint Genome Institute"/>
            <person name="Copeland A."/>
            <person name="Lucas S."/>
            <person name="Lapidus A."/>
            <person name="Barry K."/>
            <person name="Detter J.C."/>
            <person name="Glavina del Rio T."/>
            <person name="Hammon N."/>
            <person name="Israni S."/>
            <person name="Dalin E."/>
            <person name="Tice H."/>
            <person name="Pitluck S."/>
            <person name="Chertkov O."/>
            <person name="Brettin T."/>
            <person name="Bruce D."/>
            <person name="Han C."/>
            <person name="Tapia R."/>
            <person name="Gilna P."/>
            <person name="Schmutz J."/>
            <person name="Larimer F."/>
            <person name="Land M."/>
            <person name="Hauser L."/>
            <person name="Kyrpides N."/>
            <person name="Mikhailova N."/>
            <person name="Richardson P."/>
        </authorList>
    </citation>
    <scope>NUCLEOTIDE SEQUENCE [LARGE SCALE GENOMIC DNA]</scope>
    <source>
        <strain>BNC1</strain>
    </source>
</reference>
<name>KDSB_CHESB</name>